<accession>Q6A6A3</accession>
<proteinExistence type="inferred from homology"/>
<comment type="function">
    <text evidence="1">Plays an important role in the de novo pathway of purine nucleotide biosynthesis. Catalyzes the first committed step in the biosynthesis of AMP from IMP.</text>
</comment>
<comment type="catalytic activity">
    <reaction evidence="1">
        <text>IMP + L-aspartate + GTP = N(6)-(1,2-dicarboxyethyl)-AMP + GDP + phosphate + 2 H(+)</text>
        <dbReference type="Rhea" id="RHEA:15753"/>
        <dbReference type="ChEBI" id="CHEBI:15378"/>
        <dbReference type="ChEBI" id="CHEBI:29991"/>
        <dbReference type="ChEBI" id="CHEBI:37565"/>
        <dbReference type="ChEBI" id="CHEBI:43474"/>
        <dbReference type="ChEBI" id="CHEBI:57567"/>
        <dbReference type="ChEBI" id="CHEBI:58053"/>
        <dbReference type="ChEBI" id="CHEBI:58189"/>
        <dbReference type="EC" id="6.3.4.4"/>
    </reaction>
</comment>
<comment type="cofactor">
    <cofactor evidence="1">
        <name>Mg(2+)</name>
        <dbReference type="ChEBI" id="CHEBI:18420"/>
    </cofactor>
    <text evidence="1">Binds 1 Mg(2+) ion per subunit.</text>
</comment>
<comment type="pathway">
    <text evidence="1">Purine metabolism; AMP biosynthesis via de novo pathway; AMP from IMP: step 1/2.</text>
</comment>
<comment type="subunit">
    <text evidence="1">Homodimer.</text>
</comment>
<comment type="subcellular location">
    <subcellularLocation>
        <location evidence="1">Cytoplasm</location>
    </subcellularLocation>
</comment>
<comment type="similarity">
    <text evidence="1">Belongs to the adenylosuccinate synthetase family.</text>
</comment>
<protein>
    <recommendedName>
        <fullName evidence="1">Adenylosuccinate synthetase</fullName>
        <shortName evidence="1">AMPSase</shortName>
        <shortName evidence="1">AdSS</shortName>
        <ecNumber evidence="1">6.3.4.4</ecNumber>
    </recommendedName>
    <alternativeName>
        <fullName evidence="1">IMP--aspartate ligase</fullName>
    </alternativeName>
</protein>
<gene>
    <name evidence="1" type="primary">purA</name>
    <name type="ordered locus">PPA1994</name>
</gene>
<sequence>MPGIVVMGTQWGDEGKGKATDLMSERVDYCVRYSGGNNAGHTVVVGDEKFFMHLLPSGVLNPNSTAVLGNGVVLNLDVLADEIDALRGRGVDIPHPLISANAHLITPYHQTLDKVTERFLGSRRIGTTGRGIGPTYSDKINRMGIRVQDLFDESILRQKVEASLDQKNQILVKIYNRRAIDPGEVADGLLAHAERIRPYVVDVARVLNKGLDEGKVVLFEGAQAHHLDVDFGTYPYVTSSNPIAAGACTGSGVGPTRIDRIVGIAKAYTTRVGEGPFPTELCDDDGERLRSEGGEYGVTTKRPRRCGWFDALVVQQAVMINSVTDLFLTKLDVLTGWERIPVCVGYDIDGERTDIMPVTQSDLHHAKPVYEFLDGWSEDISTARSFDDLPRNCQAYVRRLEELVGTRVSGIGVGAGRDESVVINDLID</sequence>
<keyword id="KW-0963">Cytoplasm</keyword>
<keyword id="KW-0342">GTP-binding</keyword>
<keyword id="KW-0436">Ligase</keyword>
<keyword id="KW-0460">Magnesium</keyword>
<keyword id="KW-0479">Metal-binding</keyword>
<keyword id="KW-0547">Nucleotide-binding</keyword>
<keyword id="KW-0658">Purine biosynthesis</keyword>
<dbReference type="EC" id="6.3.4.4" evidence="1"/>
<dbReference type="EMBL" id="AE017283">
    <property type="protein sequence ID" value="AAT83710.1"/>
    <property type="molecule type" value="Genomic_DNA"/>
</dbReference>
<dbReference type="SMR" id="Q6A6A3"/>
<dbReference type="EnsemblBacteria" id="AAT83710">
    <property type="protein sequence ID" value="AAT83710"/>
    <property type="gene ID" value="PPA1994"/>
</dbReference>
<dbReference type="KEGG" id="pac:PPA1994"/>
<dbReference type="PATRIC" id="fig|267747.3.peg.2044"/>
<dbReference type="eggNOG" id="COG0104">
    <property type="taxonomic scope" value="Bacteria"/>
</dbReference>
<dbReference type="HOGENOM" id="CLU_029848_0_0_11"/>
<dbReference type="UniPathway" id="UPA00075">
    <property type="reaction ID" value="UER00335"/>
</dbReference>
<dbReference type="Proteomes" id="UP000000603">
    <property type="component" value="Chromosome"/>
</dbReference>
<dbReference type="GO" id="GO:0005737">
    <property type="term" value="C:cytoplasm"/>
    <property type="evidence" value="ECO:0007669"/>
    <property type="project" value="UniProtKB-SubCell"/>
</dbReference>
<dbReference type="GO" id="GO:0004019">
    <property type="term" value="F:adenylosuccinate synthase activity"/>
    <property type="evidence" value="ECO:0007669"/>
    <property type="project" value="UniProtKB-UniRule"/>
</dbReference>
<dbReference type="GO" id="GO:0005525">
    <property type="term" value="F:GTP binding"/>
    <property type="evidence" value="ECO:0007669"/>
    <property type="project" value="UniProtKB-UniRule"/>
</dbReference>
<dbReference type="GO" id="GO:0000287">
    <property type="term" value="F:magnesium ion binding"/>
    <property type="evidence" value="ECO:0007669"/>
    <property type="project" value="UniProtKB-UniRule"/>
</dbReference>
<dbReference type="GO" id="GO:0044208">
    <property type="term" value="P:'de novo' AMP biosynthetic process"/>
    <property type="evidence" value="ECO:0007669"/>
    <property type="project" value="UniProtKB-UniRule"/>
</dbReference>
<dbReference type="GO" id="GO:0046040">
    <property type="term" value="P:IMP metabolic process"/>
    <property type="evidence" value="ECO:0007669"/>
    <property type="project" value="TreeGrafter"/>
</dbReference>
<dbReference type="CDD" id="cd03108">
    <property type="entry name" value="AdSS"/>
    <property type="match status" value="1"/>
</dbReference>
<dbReference type="FunFam" id="1.10.300.10:FF:000001">
    <property type="entry name" value="Adenylosuccinate synthetase"/>
    <property type="match status" value="1"/>
</dbReference>
<dbReference type="FunFam" id="3.90.170.10:FF:000001">
    <property type="entry name" value="Adenylosuccinate synthetase"/>
    <property type="match status" value="1"/>
</dbReference>
<dbReference type="Gene3D" id="3.40.440.10">
    <property type="entry name" value="Adenylosuccinate Synthetase, subunit A, domain 1"/>
    <property type="match status" value="1"/>
</dbReference>
<dbReference type="Gene3D" id="1.10.300.10">
    <property type="entry name" value="Adenylosuccinate Synthetase, subunit A, domain 2"/>
    <property type="match status" value="1"/>
</dbReference>
<dbReference type="Gene3D" id="3.90.170.10">
    <property type="entry name" value="Adenylosuccinate Synthetase, subunit A, domain 3"/>
    <property type="match status" value="1"/>
</dbReference>
<dbReference type="HAMAP" id="MF_00011">
    <property type="entry name" value="Adenylosucc_synth"/>
    <property type="match status" value="1"/>
</dbReference>
<dbReference type="InterPro" id="IPR018220">
    <property type="entry name" value="Adenylosuccin_syn_GTP-bd"/>
</dbReference>
<dbReference type="InterPro" id="IPR033128">
    <property type="entry name" value="Adenylosuccin_syn_Lys_AS"/>
</dbReference>
<dbReference type="InterPro" id="IPR042109">
    <property type="entry name" value="Adenylosuccinate_synth_dom1"/>
</dbReference>
<dbReference type="InterPro" id="IPR042110">
    <property type="entry name" value="Adenylosuccinate_synth_dom2"/>
</dbReference>
<dbReference type="InterPro" id="IPR042111">
    <property type="entry name" value="Adenylosuccinate_synth_dom3"/>
</dbReference>
<dbReference type="InterPro" id="IPR001114">
    <property type="entry name" value="Adenylosuccinate_synthetase"/>
</dbReference>
<dbReference type="InterPro" id="IPR027417">
    <property type="entry name" value="P-loop_NTPase"/>
</dbReference>
<dbReference type="NCBIfam" id="NF002223">
    <property type="entry name" value="PRK01117.1"/>
    <property type="match status" value="1"/>
</dbReference>
<dbReference type="NCBIfam" id="TIGR00184">
    <property type="entry name" value="purA"/>
    <property type="match status" value="1"/>
</dbReference>
<dbReference type="PANTHER" id="PTHR11846">
    <property type="entry name" value="ADENYLOSUCCINATE SYNTHETASE"/>
    <property type="match status" value="1"/>
</dbReference>
<dbReference type="PANTHER" id="PTHR11846:SF0">
    <property type="entry name" value="ADENYLOSUCCINATE SYNTHETASE"/>
    <property type="match status" value="1"/>
</dbReference>
<dbReference type="Pfam" id="PF00709">
    <property type="entry name" value="Adenylsucc_synt"/>
    <property type="match status" value="1"/>
</dbReference>
<dbReference type="SMART" id="SM00788">
    <property type="entry name" value="Adenylsucc_synt"/>
    <property type="match status" value="1"/>
</dbReference>
<dbReference type="SUPFAM" id="SSF52540">
    <property type="entry name" value="P-loop containing nucleoside triphosphate hydrolases"/>
    <property type="match status" value="1"/>
</dbReference>
<dbReference type="PROSITE" id="PS01266">
    <property type="entry name" value="ADENYLOSUCCIN_SYN_1"/>
    <property type="match status" value="1"/>
</dbReference>
<dbReference type="PROSITE" id="PS00513">
    <property type="entry name" value="ADENYLOSUCCIN_SYN_2"/>
    <property type="match status" value="1"/>
</dbReference>
<evidence type="ECO:0000255" key="1">
    <source>
        <dbReference type="HAMAP-Rule" id="MF_00011"/>
    </source>
</evidence>
<name>PURA_CUTAK</name>
<reference key="1">
    <citation type="journal article" date="2004" name="Science">
        <title>The complete genome sequence of Propionibacterium acnes, a commensal of human skin.</title>
        <authorList>
            <person name="Brueggemann H."/>
            <person name="Henne A."/>
            <person name="Hoster F."/>
            <person name="Liesegang H."/>
            <person name="Wiezer A."/>
            <person name="Strittmatter A."/>
            <person name="Hujer S."/>
            <person name="Duerre P."/>
            <person name="Gottschalk G."/>
        </authorList>
    </citation>
    <scope>NUCLEOTIDE SEQUENCE [LARGE SCALE GENOMIC DNA]</scope>
    <source>
        <strain>DSM 16379 / KPA171202</strain>
    </source>
</reference>
<feature type="chain" id="PRO_0000224304" description="Adenylosuccinate synthetase">
    <location>
        <begin position="1"/>
        <end position="428"/>
    </location>
</feature>
<feature type="active site" description="Proton acceptor" evidence="1">
    <location>
        <position position="13"/>
    </location>
</feature>
<feature type="active site" description="Proton donor" evidence="1">
    <location>
        <position position="41"/>
    </location>
</feature>
<feature type="binding site" evidence="1">
    <location>
        <begin position="12"/>
        <end position="18"/>
    </location>
    <ligand>
        <name>GTP</name>
        <dbReference type="ChEBI" id="CHEBI:37565"/>
    </ligand>
</feature>
<feature type="binding site" description="in other chain" evidence="1">
    <location>
        <begin position="13"/>
        <end position="16"/>
    </location>
    <ligand>
        <name>IMP</name>
        <dbReference type="ChEBI" id="CHEBI:58053"/>
        <note>ligand shared between dimeric partners</note>
    </ligand>
</feature>
<feature type="binding site" evidence="1">
    <location>
        <position position="13"/>
    </location>
    <ligand>
        <name>Mg(2+)</name>
        <dbReference type="ChEBI" id="CHEBI:18420"/>
    </ligand>
</feature>
<feature type="binding site" description="in other chain" evidence="1">
    <location>
        <begin position="38"/>
        <end position="41"/>
    </location>
    <ligand>
        <name>IMP</name>
        <dbReference type="ChEBI" id="CHEBI:58053"/>
        <note>ligand shared between dimeric partners</note>
    </ligand>
</feature>
<feature type="binding site" evidence="1">
    <location>
        <begin position="40"/>
        <end position="42"/>
    </location>
    <ligand>
        <name>GTP</name>
        <dbReference type="ChEBI" id="CHEBI:37565"/>
    </ligand>
</feature>
<feature type="binding site" evidence="1">
    <location>
        <position position="40"/>
    </location>
    <ligand>
        <name>Mg(2+)</name>
        <dbReference type="ChEBI" id="CHEBI:18420"/>
    </ligand>
</feature>
<feature type="binding site" description="in other chain" evidence="1">
    <location>
        <position position="128"/>
    </location>
    <ligand>
        <name>IMP</name>
        <dbReference type="ChEBI" id="CHEBI:58053"/>
        <note>ligand shared between dimeric partners</note>
    </ligand>
</feature>
<feature type="binding site" evidence="1">
    <location>
        <position position="142"/>
    </location>
    <ligand>
        <name>IMP</name>
        <dbReference type="ChEBI" id="CHEBI:58053"/>
        <note>ligand shared between dimeric partners</note>
    </ligand>
</feature>
<feature type="binding site" description="in other chain" evidence="1">
    <location>
        <position position="223"/>
    </location>
    <ligand>
        <name>IMP</name>
        <dbReference type="ChEBI" id="CHEBI:58053"/>
        <note>ligand shared between dimeric partners</note>
    </ligand>
</feature>
<feature type="binding site" description="in other chain" evidence="1">
    <location>
        <position position="238"/>
    </location>
    <ligand>
        <name>IMP</name>
        <dbReference type="ChEBI" id="CHEBI:58053"/>
        <note>ligand shared between dimeric partners</note>
    </ligand>
</feature>
<feature type="binding site" evidence="1">
    <location>
        <begin position="298"/>
        <end position="304"/>
    </location>
    <ligand>
        <name>substrate</name>
    </ligand>
</feature>
<feature type="binding site" description="in other chain" evidence="1">
    <location>
        <position position="302"/>
    </location>
    <ligand>
        <name>IMP</name>
        <dbReference type="ChEBI" id="CHEBI:58053"/>
        <note>ligand shared between dimeric partners</note>
    </ligand>
</feature>
<feature type="binding site" evidence="1">
    <location>
        <position position="304"/>
    </location>
    <ligand>
        <name>GTP</name>
        <dbReference type="ChEBI" id="CHEBI:37565"/>
    </ligand>
</feature>
<feature type="binding site" evidence="1">
    <location>
        <begin position="330"/>
        <end position="332"/>
    </location>
    <ligand>
        <name>GTP</name>
        <dbReference type="ChEBI" id="CHEBI:37565"/>
    </ligand>
</feature>
<feature type="binding site" evidence="1">
    <location>
        <begin position="412"/>
        <end position="414"/>
    </location>
    <ligand>
        <name>GTP</name>
        <dbReference type="ChEBI" id="CHEBI:37565"/>
    </ligand>
</feature>
<organism>
    <name type="scientific">Cutibacterium acnes (strain DSM 16379 / KPA171202)</name>
    <name type="common">Propionibacterium acnes</name>
    <dbReference type="NCBI Taxonomy" id="267747"/>
    <lineage>
        <taxon>Bacteria</taxon>
        <taxon>Bacillati</taxon>
        <taxon>Actinomycetota</taxon>
        <taxon>Actinomycetes</taxon>
        <taxon>Propionibacteriales</taxon>
        <taxon>Propionibacteriaceae</taxon>
        <taxon>Cutibacterium</taxon>
    </lineage>
</organism>